<evidence type="ECO:0000255" key="1"/>
<evidence type="ECO:0000269" key="2">
    <source>
    </source>
</evidence>
<evidence type="ECO:0000305" key="3"/>
<proteinExistence type="evidence at protein level"/>
<organism>
    <name type="scientific">Homo sapiens</name>
    <name type="common">Human</name>
    <dbReference type="NCBI Taxonomy" id="9606"/>
    <lineage>
        <taxon>Eukaryota</taxon>
        <taxon>Metazoa</taxon>
        <taxon>Chordata</taxon>
        <taxon>Craniata</taxon>
        <taxon>Vertebrata</taxon>
        <taxon>Euteleostomi</taxon>
        <taxon>Mammalia</taxon>
        <taxon>Eutheria</taxon>
        <taxon>Euarchontoglires</taxon>
        <taxon>Primates</taxon>
        <taxon>Haplorrhini</taxon>
        <taxon>Catarrhini</taxon>
        <taxon>Hominidae</taxon>
        <taxon>Homo</taxon>
    </lineage>
</organism>
<feature type="chain" id="PRO_0000284505" description="Transmembrane protein 156">
    <location>
        <begin position="1"/>
        <end position="296"/>
    </location>
</feature>
<feature type="topological domain" description="Cytoplasmic" evidence="1">
    <location>
        <begin position="1"/>
        <end position="4"/>
    </location>
</feature>
<feature type="transmembrane region" description="Helical" evidence="1">
    <location>
        <begin position="5"/>
        <end position="25"/>
    </location>
</feature>
<feature type="topological domain" description="Extracellular" evidence="1">
    <location>
        <begin position="26"/>
        <end position="211"/>
    </location>
</feature>
<feature type="transmembrane region" description="Helical" evidence="1">
    <location>
        <begin position="212"/>
        <end position="232"/>
    </location>
</feature>
<feature type="topological domain" description="Cytoplasmic" evidence="1">
    <location>
        <begin position="233"/>
        <end position="296"/>
    </location>
</feature>
<feature type="glycosylation site" description="N-linked (GlcNAc...) asparagine" evidence="1">
    <location>
        <position position="45"/>
    </location>
</feature>
<feature type="glycosylation site" description="N-linked (GlcNAc...) asparagine" evidence="1">
    <location>
        <position position="156"/>
    </location>
</feature>
<feature type="sequence variant" id="VAR_031756" description="In dbSNP:rs35576563.">
    <original>Y</original>
    <variation>C</variation>
    <location>
        <position position="48"/>
    </location>
</feature>
<feature type="sequence variant" id="VAR_051430" description="In dbSNP:rs11542133." evidence="2">
    <original>S</original>
    <variation>P</variation>
    <location>
        <position position="105"/>
    </location>
</feature>
<feature type="sequence variant" id="VAR_031757" description="In dbSNP:rs2276887.">
    <original>M</original>
    <variation>T</variation>
    <location>
        <position position="212"/>
    </location>
</feature>
<keyword id="KW-0325">Glycoprotein</keyword>
<keyword id="KW-0472">Membrane</keyword>
<keyword id="KW-1267">Proteomics identification</keyword>
<keyword id="KW-1185">Reference proteome</keyword>
<keyword id="KW-0812">Transmembrane</keyword>
<keyword id="KW-1133">Transmembrane helix</keyword>
<reference key="1">
    <citation type="journal article" date="2004" name="Nat. Genet.">
        <title>Complete sequencing and characterization of 21,243 full-length human cDNAs.</title>
        <authorList>
            <person name="Ota T."/>
            <person name="Suzuki Y."/>
            <person name="Nishikawa T."/>
            <person name="Otsuki T."/>
            <person name="Sugiyama T."/>
            <person name="Irie R."/>
            <person name="Wakamatsu A."/>
            <person name="Hayashi K."/>
            <person name="Sato H."/>
            <person name="Nagai K."/>
            <person name="Kimura K."/>
            <person name="Makita H."/>
            <person name="Sekine M."/>
            <person name="Obayashi M."/>
            <person name="Nishi T."/>
            <person name="Shibahara T."/>
            <person name="Tanaka T."/>
            <person name="Ishii S."/>
            <person name="Yamamoto J."/>
            <person name="Saito K."/>
            <person name="Kawai Y."/>
            <person name="Isono Y."/>
            <person name="Nakamura Y."/>
            <person name="Nagahari K."/>
            <person name="Murakami K."/>
            <person name="Yasuda T."/>
            <person name="Iwayanagi T."/>
            <person name="Wagatsuma M."/>
            <person name="Shiratori A."/>
            <person name="Sudo H."/>
            <person name="Hosoiri T."/>
            <person name="Kaku Y."/>
            <person name="Kodaira H."/>
            <person name="Kondo H."/>
            <person name="Sugawara M."/>
            <person name="Takahashi M."/>
            <person name="Kanda K."/>
            <person name="Yokoi T."/>
            <person name="Furuya T."/>
            <person name="Kikkawa E."/>
            <person name="Omura Y."/>
            <person name="Abe K."/>
            <person name="Kamihara K."/>
            <person name="Katsuta N."/>
            <person name="Sato K."/>
            <person name="Tanikawa M."/>
            <person name="Yamazaki M."/>
            <person name="Ninomiya K."/>
            <person name="Ishibashi T."/>
            <person name="Yamashita H."/>
            <person name="Murakawa K."/>
            <person name="Fujimori K."/>
            <person name="Tanai H."/>
            <person name="Kimata M."/>
            <person name="Watanabe M."/>
            <person name="Hiraoka S."/>
            <person name="Chiba Y."/>
            <person name="Ishida S."/>
            <person name="Ono Y."/>
            <person name="Takiguchi S."/>
            <person name="Watanabe S."/>
            <person name="Yosida M."/>
            <person name="Hotuta T."/>
            <person name="Kusano J."/>
            <person name="Kanehori K."/>
            <person name="Takahashi-Fujii A."/>
            <person name="Hara H."/>
            <person name="Tanase T.-O."/>
            <person name="Nomura Y."/>
            <person name="Togiya S."/>
            <person name="Komai F."/>
            <person name="Hara R."/>
            <person name="Takeuchi K."/>
            <person name="Arita M."/>
            <person name="Imose N."/>
            <person name="Musashino K."/>
            <person name="Yuuki H."/>
            <person name="Oshima A."/>
            <person name="Sasaki N."/>
            <person name="Aotsuka S."/>
            <person name="Yoshikawa Y."/>
            <person name="Matsunawa H."/>
            <person name="Ichihara T."/>
            <person name="Shiohata N."/>
            <person name="Sano S."/>
            <person name="Moriya S."/>
            <person name="Momiyama H."/>
            <person name="Satoh N."/>
            <person name="Takami S."/>
            <person name="Terashima Y."/>
            <person name="Suzuki O."/>
            <person name="Nakagawa S."/>
            <person name="Senoh A."/>
            <person name="Mizoguchi H."/>
            <person name="Goto Y."/>
            <person name="Shimizu F."/>
            <person name="Wakebe H."/>
            <person name="Hishigaki H."/>
            <person name="Watanabe T."/>
            <person name="Sugiyama A."/>
            <person name="Takemoto M."/>
            <person name="Kawakami B."/>
            <person name="Yamazaki M."/>
            <person name="Watanabe K."/>
            <person name="Kumagai A."/>
            <person name="Itakura S."/>
            <person name="Fukuzumi Y."/>
            <person name="Fujimori Y."/>
            <person name="Komiyama M."/>
            <person name="Tashiro H."/>
            <person name="Tanigami A."/>
            <person name="Fujiwara T."/>
            <person name="Ono T."/>
            <person name="Yamada K."/>
            <person name="Fujii Y."/>
            <person name="Ozaki K."/>
            <person name="Hirao M."/>
            <person name="Ohmori Y."/>
            <person name="Kawabata A."/>
            <person name="Hikiji T."/>
            <person name="Kobatake N."/>
            <person name="Inagaki H."/>
            <person name="Ikema Y."/>
            <person name="Okamoto S."/>
            <person name="Okitani R."/>
            <person name="Kawakami T."/>
            <person name="Noguchi S."/>
            <person name="Itoh T."/>
            <person name="Shigeta K."/>
            <person name="Senba T."/>
            <person name="Matsumura K."/>
            <person name="Nakajima Y."/>
            <person name="Mizuno T."/>
            <person name="Morinaga M."/>
            <person name="Sasaki M."/>
            <person name="Togashi T."/>
            <person name="Oyama M."/>
            <person name="Hata H."/>
            <person name="Watanabe M."/>
            <person name="Komatsu T."/>
            <person name="Mizushima-Sugano J."/>
            <person name="Satoh T."/>
            <person name="Shirai Y."/>
            <person name="Takahashi Y."/>
            <person name="Nakagawa K."/>
            <person name="Okumura K."/>
            <person name="Nagase T."/>
            <person name="Nomura N."/>
            <person name="Kikuchi H."/>
            <person name="Masuho Y."/>
            <person name="Yamashita R."/>
            <person name="Nakai K."/>
            <person name="Yada T."/>
            <person name="Nakamura Y."/>
            <person name="Ohara O."/>
            <person name="Isogai T."/>
            <person name="Sugano S."/>
        </authorList>
    </citation>
    <scope>NUCLEOTIDE SEQUENCE [LARGE SCALE MRNA]</scope>
    <source>
        <tissue>Smooth muscle</tissue>
    </source>
</reference>
<reference key="2">
    <citation type="journal article" date="2004" name="Genome Res.">
        <title>The status, quality, and expansion of the NIH full-length cDNA project: the Mammalian Gene Collection (MGC).</title>
        <authorList>
            <consortium name="The MGC Project Team"/>
        </authorList>
    </citation>
    <scope>NUCLEOTIDE SEQUENCE [LARGE SCALE MRNA]</scope>
    <scope>VARIANT PRO-105</scope>
    <source>
        <tissue>Prostate</tissue>
    </source>
</reference>
<name>TM156_HUMAN</name>
<accession>Q8N614</accession>
<accession>Q9H5N9</accession>
<protein>
    <recommendedName>
        <fullName>Transmembrane protein 156</fullName>
    </recommendedName>
</protein>
<sequence length="296" mass="34323">MTKTALLKLFVAIVITFILILPEYFKTPKERTLELSCLEVCLQSNFTYSLSSLNFSFVTFLQPVRETQIIMRIFLNPSNFRNFTRTCQDITGEFKMCSSCLVCESKGNMDFISQEQTSKVLIRRGSMEVKANDFHSPCQHFNFSVAPLVDHLEEYNTTCHLKNHTGRSTIMEDEPSKEKSINYTCRIMEYPNDCIHISLHLEMDIKNITCSMKITWYILVLLVFIFLIILTIRKILEGQRRVQKWQSHRDKPTSVLLRGSDSEKLRALNVQVLSAETTQRLPLDQVQEVLPPIPEL</sequence>
<gene>
    <name type="primary">TMEM156</name>
</gene>
<comment type="subcellular location">
    <subcellularLocation>
        <location evidence="3">Membrane</location>
        <topology evidence="3">Multi-pass membrane protein</topology>
    </subcellularLocation>
</comment>
<dbReference type="EMBL" id="AK026888">
    <property type="protein sequence ID" value="BAB15583.1"/>
    <property type="molecule type" value="mRNA"/>
</dbReference>
<dbReference type="EMBL" id="BC030803">
    <property type="protein sequence ID" value="AAH30803.1"/>
    <property type="molecule type" value="mRNA"/>
</dbReference>
<dbReference type="CCDS" id="CCDS3448.1"/>
<dbReference type="RefSeq" id="NP_001290157.1">
    <property type="nucleotide sequence ID" value="NM_001303228.1"/>
</dbReference>
<dbReference type="RefSeq" id="NP_079219.1">
    <property type="nucleotide sequence ID" value="NM_024943.3"/>
</dbReference>
<dbReference type="RefSeq" id="XP_011512051.1">
    <property type="nucleotide sequence ID" value="XM_011513749.2"/>
</dbReference>
<dbReference type="RefSeq" id="XP_047272143.1">
    <property type="nucleotide sequence ID" value="XM_047416187.1"/>
</dbReference>
<dbReference type="RefSeq" id="XP_054206842.1">
    <property type="nucleotide sequence ID" value="XM_054350867.1"/>
</dbReference>
<dbReference type="RefSeq" id="XP_054206843.1">
    <property type="nucleotide sequence ID" value="XM_054350868.1"/>
</dbReference>
<dbReference type="BioGRID" id="123065">
    <property type="interactions" value="6"/>
</dbReference>
<dbReference type="FunCoup" id="Q8N614">
    <property type="interactions" value="36"/>
</dbReference>
<dbReference type="IntAct" id="Q8N614">
    <property type="interactions" value="3"/>
</dbReference>
<dbReference type="STRING" id="9606.ENSP00000371364"/>
<dbReference type="GlyCosmos" id="Q8N614">
    <property type="glycosylation" value="2 sites, No reported glycans"/>
</dbReference>
<dbReference type="GlyGen" id="Q8N614">
    <property type="glycosylation" value="4 sites, 1 N-linked glycan (1 site), 1 O-linked glycan (1 site)"/>
</dbReference>
<dbReference type="iPTMnet" id="Q8N614"/>
<dbReference type="PhosphoSitePlus" id="Q8N614"/>
<dbReference type="BioMuta" id="TMEM156"/>
<dbReference type="DMDM" id="145566966"/>
<dbReference type="MassIVE" id="Q8N614"/>
<dbReference type="PaxDb" id="9606-ENSP00000371364"/>
<dbReference type="PeptideAtlas" id="Q8N614"/>
<dbReference type="ProteomicsDB" id="72125"/>
<dbReference type="Antibodypedia" id="23382">
    <property type="antibodies" value="8 antibodies from 6 providers"/>
</dbReference>
<dbReference type="DNASU" id="80008"/>
<dbReference type="Ensembl" id="ENST00000381938.4">
    <property type="protein sequence ID" value="ENSP00000371364.3"/>
    <property type="gene ID" value="ENSG00000121895.8"/>
</dbReference>
<dbReference type="GeneID" id="80008"/>
<dbReference type="KEGG" id="hsa:80008"/>
<dbReference type="MANE-Select" id="ENST00000381938.4">
    <property type="protein sequence ID" value="ENSP00000371364.3"/>
    <property type="RefSeq nucleotide sequence ID" value="NM_024943.3"/>
    <property type="RefSeq protein sequence ID" value="NP_079219.1"/>
</dbReference>
<dbReference type="UCSC" id="uc003gto.4">
    <property type="organism name" value="human"/>
</dbReference>
<dbReference type="AGR" id="HGNC:26260"/>
<dbReference type="CTD" id="80008"/>
<dbReference type="DisGeNET" id="80008"/>
<dbReference type="GeneCards" id="TMEM156"/>
<dbReference type="HGNC" id="HGNC:26260">
    <property type="gene designation" value="TMEM156"/>
</dbReference>
<dbReference type="HPA" id="ENSG00000121895">
    <property type="expression patterns" value="Tissue enriched (lymphoid)"/>
</dbReference>
<dbReference type="neXtProt" id="NX_Q8N614"/>
<dbReference type="OpenTargets" id="ENSG00000121895"/>
<dbReference type="PharmGKB" id="PA145007464"/>
<dbReference type="VEuPathDB" id="HostDB:ENSG00000121895"/>
<dbReference type="eggNOG" id="ENOG502SAF3">
    <property type="taxonomic scope" value="Eukaryota"/>
</dbReference>
<dbReference type="GeneTree" id="ENSGT00390000017929"/>
<dbReference type="HOGENOM" id="CLU_081882_0_0_1"/>
<dbReference type="InParanoid" id="Q8N614"/>
<dbReference type="OMA" id="TSEFKMC"/>
<dbReference type="OrthoDB" id="9422827at2759"/>
<dbReference type="PAN-GO" id="Q8N614">
    <property type="GO annotations" value="0 GO annotations based on evolutionary models"/>
</dbReference>
<dbReference type="PhylomeDB" id="Q8N614"/>
<dbReference type="TreeFam" id="TF336964"/>
<dbReference type="PathwayCommons" id="Q8N614"/>
<dbReference type="SignaLink" id="Q8N614"/>
<dbReference type="BioGRID-ORCS" id="80008">
    <property type="hits" value="7 hits in 1154 CRISPR screens"/>
</dbReference>
<dbReference type="ChiTaRS" id="TMEM156">
    <property type="organism name" value="human"/>
</dbReference>
<dbReference type="GenomeRNAi" id="80008"/>
<dbReference type="Pharos" id="Q8N614">
    <property type="development level" value="Tdark"/>
</dbReference>
<dbReference type="PRO" id="PR:Q8N614"/>
<dbReference type="Proteomes" id="UP000005640">
    <property type="component" value="Chromosome 4"/>
</dbReference>
<dbReference type="RNAct" id="Q8N614">
    <property type="molecule type" value="protein"/>
</dbReference>
<dbReference type="Bgee" id="ENSG00000121895">
    <property type="expression patterns" value="Expressed in buccal mucosa cell and 120 other cell types or tissues"/>
</dbReference>
<dbReference type="ExpressionAtlas" id="Q8N614">
    <property type="expression patterns" value="baseline and differential"/>
</dbReference>
<dbReference type="GO" id="GO:0016020">
    <property type="term" value="C:membrane"/>
    <property type="evidence" value="ECO:0007669"/>
    <property type="project" value="UniProtKB-SubCell"/>
</dbReference>
<dbReference type="InterPro" id="IPR029374">
    <property type="entry name" value="TMEM156"/>
</dbReference>
<dbReference type="PANTHER" id="PTHR14788">
    <property type="entry name" value="TRANSMEMBRANE PROTEIN 156"/>
    <property type="match status" value="1"/>
</dbReference>
<dbReference type="PANTHER" id="PTHR14788:SF5">
    <property type="entry name" value="TRANSMEMBRANE PROTEIN 156"/>
    <property type="match status" value="1"/>
</dbReference>
<dbReference type="Pfam" id="PF15106">
    <property type="entry name" value="TMEM156"/>
    <property type="match status" value="1"/>
</dbReference>